<comment type="function">
    <text evidence="1">Catalyzes the ATP-dependent conversion of 7-carboxy-7-deazaguanine (CDG) to 7-cyano-7-deazaguanine (preQ(0)).</text>
</comment>
<comment type="catalytic activity">
    <reaction evidence="1">
        <text>7-carboxy-7-deazaguanine + NH4(+) + ATP = 7-cyano-7-deazaguanine + ADP + phosphate + H2O + H(+)</text>
        <dbReference type="Rhea" id="RHEA:27982"/>
        <dbReference type="ChEBI" id="CHEBI:15377"/>
        <dbReference type="ChEBI" id="CHEBI:15378"/>
        <dbReference type="ChEBI" id="CHEBI:28938"/>
        <dbReference type="ChEBI" id="CHEBI:30616"/>
        <dbReference type="ChEBI" id="CHEBI:43474"/>
        <dbReference type="ChEBI" id="CHEBI:45075"/>
        <dbReference type="ChEBI" id="CHEBI:61036"/>
        <dbReference type="ChEBI" id="CHEBI:456216"/>
        <dbReference type="EC" id="6.3.4.20"/>
    </reaction>
</comment>
<comment type="cofactor">
    <cofactor evidence="1">
        <name>Zn(2+)</name>
        <dbReference type="ChEBI" id="CHEBI:29105"/>
    </cofactor>
    <text evidence="1">Binds 1 zinc ion per subunit.</text>
</comment>
<comment type="pathway">
    <text evidence="1">Purine metabolism; 7-cyano-7-deazaguanine biosynthesis.</text>
</comment>
<comment type="similarity">
    <text evidence="1">Belongs to the QueC family.</text>
</comment>
<keyword id="KW-0067">ATP-binding</keyword>
<keyword id="KW-0436">Ligase</keyword>
<keyword id="KW-0479">Metal-binding</keyword>
<keyword id="KW-0547">Nucleotide-binding</keyword>
<keyword id="KW-0671">Queuosine biosynthesis</keyword>
<keyword id="KW-0862">Zinc</keyword>
<name>QUEC_YERPN</name>
<accession>Q1CL58</accession>
<accession>C4GQL7</accession>
<sequence length="232" mass="25472">MKRAVVVFSGGQDSTTCLIQALQQYDEVHCITFDYGQRHRTEIDVARELALQLGATAHKVLDVGMLNELAVSSLTRDSIPVPSYDANADGALPSTFVPGRNILFLTLASIYAYQVQAQAVITGVCETDFSGYPDCRDEFIKALNHAIDLGIGRDIAFITPLMWLDKAETWALADYYQQLDLIRHHTLTCYNGIKGDGCGQCAACHLRAKGLASYMANKQQVILNLKQKVGLA</sequence>
<organism>
    <name type="scientific">Yersinia pestis bv. Antiqua (strain Nepal516)</name>
    <dbReference type="NCBI Taxonomy" id="377628"/>
    <lineage>
        <taxon>Bacteria</taxon>
        <taxon>Pseudomonadati</taxon>
        <taxon>Pseudomonadota</taxon>
        <taxon>Gammaproteobacteria</taxon>
        <taxon>Enterobacterales</taxon>
        <taxon>Yersiniaceae</taxon>
        <taxon>Yersinia</taxon>
    </lineage>
</organism>
<gene>
    <name evidence="1" type="primary">queC</name>
    <name type="ordered locus">YPN_0940</name>
    <name type="ORF">YP516_1019</name>
</gene>
<feature type="chain" id="PRO_0000255931" description="7-cyano-7-deazaguanine synthase">
    <location>
        <begin position="1"/>
        <end position="232"/>
    </location>
</feature>
<feature type="binding site" evidence="1">
    <location>
        <begin position="8"/>
        <end position="18"/>
    </location>
    <ligand>
        <name>ATP</name>
        <dbReference type="ChEBI" id="CHEBI:30616"/>
    </ligand>
</feature>
<feature type="binding site" evidence="1">
    <location>
        <position position="189"/>
    </location>
    <ligand>
        <name>Zn(2+)</name>
        <dbReference type="ChEBI" id="CHEBI:29105"/>
    </ligand>
</feature>
<feature type="binding site" evidence="1">
    <location>
        <position position="198"/>
    </location>
    <ligand>
        <name>Zn(2+)</name>
        <dbReference type="ChEBI" id="CHEBI:29105"/>
    </ligand>
</feature>
<feature type="binding site" evidence="1">
    <location>
        <position position="201"/>
    </location>
    <ligand>
        <name>Zn(2+)</name>
        <dbReference type="ChEBI" id="CHEBI:29105"/>
    </ligand>
</feature>
<feature type="binding site" evidence="1">
    <location>
        <position position="204"/>
    </location>
    <ligand>
        <name>Zn(2+)</name>
        <dbReference type="ChEBI" id="CHEBI:29105"/>
    </ligand>
</feature>
<protein>
    <recommendedName>
        <fullName evidence="1">7-cyano-7-deazaguanine synthase</fullName>
        <ecNumber evidence="1">6.3.4.20</ecNumber>
    </recommendedName>
    <alternativeName>
        <fullName evidence="1">7-cyano-7-carbaguanine synthase</fullName>
    </alternativeName>
    <alternativeName>
        <fullName evidence="1">PreQ(0) synthase</fullName>
    </alternativeName>
    <alternativeName>
        <fullName evidence="1">Queuosine biosynthesis protein QueC</fullName>
    </alternativeName>
</protein>
<reference key="1">
    <citation type="journal article" date="2006" name="J. Bacteriol.">
        <title>Complete genome sequence of Yersinia pestis strains Antiqua and Nepal516: evidence of gene reduction in an emerging pathogen.</title>
        <authorList>
            <person name="Chain P.S.G."/>
            <person name="Hu P."/>
            <person name="Malfatti S.A."/>
            <person name="Radnedge L."/>
            <person name="Larimer F."/>
            <person name="Vergez L.M."/>
            <person name="Worsham P."/>
            <person name="Chu M.C."/>
            <person name="Andersen G.L."/>
        </authorList>
    </citation>
    <scope>NUCLEOTIDE SEQUENCE [LARGE SCALE GENOMIC DNA]</scope>
    <source>
        <strain>Nepal516</strain>
    </source>
</reference>
<reference key="2">
    <citation type="submission" date="2009-04" db="EMBL/GenBank/DDBJ databases">
        <title>Yersinia pestis Nepal516A whole genome shotgun sequencing project.</title>
        <authorList>
            <person name="Plunkett G. III"/>
            <person name="Anderson B.D."/>
            <person name="Baumler D.J."/>
            <person name="Burland V."/>
            <person name="Cabot E.L."/>
            <person name="Glasner J.D."/>
            <person name="Mau B."/>
            <person name="Neeno-Eckwall E."/>
            <person name="Perna N.T."/>
            <person name="Munk A.C."/>
            <person name="Tapia R."/>
            <person name="Green L.D."/>
            <person name="Rogers Y.C."/>
            <person name="Detter J.C."/>
            <person name="Bruce D.C."/>
            <person name="Brettin T.S."/>
        </authorList>
    </citation>
    <scope>NUCLEOTIDE SEQUENCE [LARGE SCALE GENOMIC DNA]</scope>
    <source>
        <strain>Nepal516</strain>
    </source>
</reference>
<evidence type="ECO:0000255" key="1">
    <source>
        <dbReference type="HAMAP-Rule" id="MF_01633"/>
    </source>
</evidence>
<dbReference type="EC" id="6.3.4.20" evidence="1"/>
<dbReference type="EMBL" id="CP000305">
    <property type="protein sequence ID" value="ABG17272.1"/>
    <property type="molecule type" value="Genomic_DNA"/>
</dbReference>
<dbReference type="EMBL" id="ACNQ01000008">
    <property type="protein sequence ID" value="EEO77358.1"/>
    <property type="molecule type" value="Genomic_DNA"/>
</dbReference>
<dbReference type="RefSeq" id="WP_002208635.1">
    <property type="nucleotide sequence ID" value="NZ_ACNQ01000008.1"/>
</dbReference>
<dbReference type="SMR" id="Q1CL58"/>
<dbReference type="GeneID" id="57975561"/>
<dbReference type="KEGG" id="ypn:YPN_0940"/>
<dbReference type="HOGENOM" id="CLU_081854_0_0_6"/>
<dbReference type="UniPathway" id="UPA00391"/>
<dbReference type="Proteomes" id="UP000008936">
    <property type="component" value="Chromosome"/>
</dbReference>
<dbReference type="GO" id="GO:0005524">
    <property type="term" value="F:ATP binding"/>
    <property type="evidence" value="ECO:0007669"/>
    <property type="project" value="UniProtKB-UniRule"/>
</dbReference>
<dbReference type="GO" id="GO:0016879">
    <property type="term" value="F:ligase activity, forming carbon-nitrogen bonds"/>
    <property type="evidence" value="ECO:0007669"/>
    <property type="project" value="UniProtKB-UniRule"/>
</dbReference>
<dbReference type="GO" id="GO:0008270">
    <property type="term" value="F:zinc ion binding"/>
    <property type="evidence" value="ECO:0007669"/>
    <property type="project" value="UniProtKB-UniRule"/>
</dbReference>
<dbReference type="GO" id="GO:0008616">
    <property type="term" value="P:queuosine biosynthetic process"/>
    <property type="evidence" value="ECO:0007669"/>
    <property type="project" value="UniProtKB-UniRule"/>
</dbReference>
<dbReference type="CDD" id="cd01995">
    <property type="entry name" value="QueC-like"/>
    <property type="match status" value="1"/>
</dbReference>
<dbReference type="FunFam" id="3.40.50.620:FF:000017">
    <property type="entry name" value="7-cyano-7-deazaguanine synthase"/>
    <property type="match status" value="1"/>
</dbReference>
<dbReference type="Gene3D" id="3.40.50.620">
    <property type="entry name" value="HUPs"/>
    <property type="match status" value="1"/>
</dbReference>
<dbReference type="HAMAP" id="MF_01633">
    <property type="entry name" value="QueC"/>
    <property type="match status" value="1"/>
</dbReference>
<dbReference type="InterPro" id="IPR018317">
    <property type="entry name" value="QueC"/>
</dbReference>
<dbReference type="InterPro" id="IPR014729">
    <property type="entry name" value="Rossmann-like_a/b/a_fold"/>
</dbReference>
<dbReference type="NCBIfam" id="TIGR00364">
    <property type="entry name" value="7-cyano-7-deazaguanine synthase QueC"/>
    <property type="match status" value="1"/>
</dbReference>
<dbReference type="NCBIfam" id="NF008317">
    <property type="entry name" value="PRK11106.1"/>
    <property type="match status" value="1"/>
</dbReference>
<dbReference type="PANTHER" id="PTHR42914">
    <property type="entry name" value="7-CYANO-7-DEAZAGUANINE SYNTHASE"/>
    <property type="match status" value="1"/>
</dbReference>
<dbReference type="PANTHER" id="PTHR42914:SF1">
    <property type="entry name" value="7-CYANO-7-DEAZAGUANINE SYNTHASE"/>
    <property type="match status" value="1"/>
</dbReference>
<dbReference type="Pfam" id="PF06508">
    <property type="entry name" value="QueC"/>
    <property type="match status" value="1"/>
</dbReference>
<dbReference type="PIRSF" id="PIRSF006293">
    <property type="entry name" value="ExsB"/>
    <property type="match status" value="1"/>
</dbReference>
<dbReference type="SUPFAM" id="SSF52402">
    <property type="entry name" value="Adenine nucleotide alpha hydrolases-like"/>
    <property type="match status" value="1"/>
</dbReference>
<proteinExistence type="inferred from homology"/>